<evidence type="ECO:0000255" key="1">
    <source>
        <dbReference type="HAMAP-Rule" id="MF_00758"/>
    </source>
</evidence>
<accession>Q3BR19</accession>
<comment type="similarity">
    <text evidence="1">Belongs to the UPF0301 (AlgH) family.</text>
</comment>
<sequence length="188" mass="20086">MSVLPTPLANQLLIALPALSDPTFSRSVALICQHDENGAMGVLVNRPSEYTLGEVLSQMGIDTDDEPLREQVVLSGGPVHPERGFVIHDDAREWDSSLEVGQGVFLTTSRDILEAMAAGNGPRNALVALGCAGWGAGQLEFELGENSWLTAPSDANVLFATALEDRWQTAAGRIGVDLFRLTDYSGHA</sequence>
<feature type="chain" id="PRO_0000258892" description="UPF0301 protein XCV3063">
    <location>
        <begin position="1"/>
        <end position="188"/>
    </location>
</feature>
<proteinExistence type="inferred from homology"/>
<reference key="1">
    <citation type="journal article" date="2005" name="J. Bacteriol.">
        <title>Insights into genome plasticity and pathogenicity of the plant pathogenic Bacterium Xanthomonas campestris pv. vesicatoria revealed by the complete genome sequence.</title>
        <authorList>
            <person name="Thieme F."/>
            <person name="Koebnik R."/>
            <person name="Bekel T."/>
            <person name="Berger C."/>
            <person name="Boch J."/>
            <person name="Buettner D."/>
            <person name="Caldana C."/>
            <person name="Gaigalat L."/>
            <person name="Goesmann A."/>
            <person name="Kay S."/>
            <person name="Kirchner O."/>
            <person name="Lanz C."/>
            <person name="Linke B."/>
            <person name="McHardy A.C."/>
            <person name="Meyer F."/>
            <person name="Mittenhuber G."/>
            <person name="Nies D.H."/>
            <person name="Niesbach-Kloesgen U."/>
            <person name="Patschkowski T."/>
            <person name="Rueckert C."/>
            <person name="Rupp O."/>
            <person name="Schneiker S."/>
            <person name="Schuster S.C."/>
            <person name="Vorhoelter F.J."/>
            <person name="Weber E."/>
            <person name="Puehler A."/>
            <person name="Bonas U."/>
            <person name="Bartels D."/>
            <person name="Kaiser O."/>
        </authorList>
    </citation>
    <scope>NUCLEOTIDE SEQUENCE [LARGE SCALE GENOMIC DNA]</scope>
    <source>
        <strain>85-10</strain>
    </source>
</reference>
<gene>
    <name type="ordered locus">XCV3063</name>
</gene>
<organism>
    <name type="scientific">Xanthomonas euvesicatoria pv. vesicatoria (strain 85-10)</name>
    <name type="common">Xanthomonas campestris pv. vesicatoria</name>
    <dbReference type="NCBI Taxonomy" id="316273"/>
    <lineage>
        <taxon>Bacteria</taxon>
        <taxon>Pseudomonadati</taxon>
        <taxon>Pseudomonadota</taxon>
        <taxon>Gammaproteobacteria</taxon>
        <taxon>Lysobacterales</taxon>
        <taxon>Lysobacteraceae</taxon>
        <taxon>Xanthomonas</taxon>
    </lineage>
</organism>
<dbReference type="EMBL" id="AM039952">
    <property type="protein sequence ID" value="CAJ24786.1"/>
    <property type="molecule type" value="Genomic_DNA"/>
</dbReference>
<dbReference type="RefSeq" id="WP_003489930.1">
    <property type="nucleotide sequence ID" value="NZ_CP017190.1"/>
</dbReference>
<dbReference type="SMR" id="Q3BR19"/>
<dbReference type="STRING" id="456327.BJD11_07515"/>
<dbReference type="KEGG" id="xcv:XCV3063"/>
<dbReference type="eggNOG" id="COG1678">
    <property type="taxonomic scope" value="Bacteria"/>
</dbReference>
<dbReference type="HOGENOM" id="CLU_057596_1_0_6"/>
<dbReference type="Proteomes" id="UP000007069">
    <property type="component" value="Chromosome"/>
</dbReference>
<dbReference type="GO" id="GO:0005829">
    <property type="term" value="C:cytosol"/>
    <property type="evidence" value="ECO:0007669"/>
    <property type="project" value="TreeGrafter"/>
</dbReference>
<dbReference type="Gene3D" id="3.40.1740.10">
    <property type="entry name" value="VC0467-like"/>
    <property type="match status" value="1"/>
</dbReference>
<dbReference type="HAMAP" id="MF_00758">
    <property type="entry name" value="UPF0301"/>
    <property type="match status" value="1"/>
</dbReference>
<dbReference type="InterPro" id="IPR003774">
    <property type="entry name" value="AlgH-like"/>
</dbReference>
<dbReference type="NCBIfam" id="NF001266">
    <property type="entry name" value="PRK00228.1-1"/>
    <property type="match status" value="1"/>
</dbReference>
<dbReference type="PANTHER" id="PTHR30327">
    <property type="entry name" value="UNCHARACTERIZED PROTEIN YQGE"/>
    <property type="match status" value="1"/>
</dbReference>
<dbReference type="PANTHER" id="PTHR30327:SF1">
    <property type="entry name" value="UPF0301 PROTEIN YQGE"/>
    <property type="match status" value="1"/>
</dbReference>
<dbReference type="Pfam" id="PF02622">
    <property type="entry name" value="DUF179"/>
    <property type="match status" value="1"/>
</dbReference>
<dbReference type="SUPFAM" id="SSF143456">
    <property type="entry name" value="VC0467-like"/>
    <property type="match status" value="1"/>
</dbReference>
<protein>
    <recommendedName>
        <fullName evidence="1">UPF0301 protein XCV3063</fullName>
    </recommendedName>
</protein>
<name>Y3063_XANE5</name>